<name>NPC2_DROME</name>
<protein>
    <recommendedName>
        <fullName evidence="4">NPC intracellular cholesterol transporter 2 homolog a</fullName>
    </recommendedName>
    <alternativeName>
        <fullName>Niemann Pick type C2 protein homolog</fullName>
    </alternativeName>
</protein>
<evidence type="ECO:0000250" key="1"/>
<evidence type="ECO:0000255" key="2"/>
<evidence type="ECO:0000269" key="3">
    <source>
    </source>
</evidence>
<evidence type="ECO:0000305" key="4"/>
<evidence type="ECO:0000312" key="5">
    <source>
        <dbReference type="FlyBase" id="FBgn0031381"/>
    </source>
</evidence>
<reference key="1">
    <citation type="journal article" date="2000" name="Science">
        <title>The genome sequence of Drosophila melanogaster.</title>
        <authorList>
            <person name="Adams M.D."/>
            <person name="Celniker S.E."/>
            <person name="Holt R.A."/>
            <person name="Evans C.A."/>
            <person name="Gocayne J.D."/>
            <person name="Amanatides P.G."/>
            <person name="Scherer S.E."/>
            <person name="Li P.W."/>
            <person name="Hoskins R.A."/>
            <person name="Galle R.F."/>
            <person name="George R.A."/>
            <person name="Lewis S.E."/>
            <person name="Richards S."/>
            <person name="Ashburner M."/>
            <person name="Henderson S.N."/>
            <person name="Sutton G.G."/>
            <person name="Wortman J.R."/>
            <person name="Yandell M.D."/>
            <person name="Zhang Q."/>
            <person name="Chen L.X."/>
            <person name="Brandon R.C."/>
            <person name="Rogers Y.-H.C."/>
            <person name="Blazej R.G."/>
            <person name="Champe M."/>
            <person name="Pfeiffer B.D."/>
            <person name="Wan K.H."/>
            <person name="Doyle C."/>
            <person name="Baxter E.G."/>
            <person name="Helt G."/>
            <person name="Nelson C.R."/>
            <person name="Miklos G.L.G."/>
            <person name="Abril J.F."/>
            <person name="Agbayani A."/>
            <person name="An H.-J."/>
            <person name="Andrews-Pfannkoch C."/>
            <person name="Baldwin D."/>
            <person name="Ballew R.M."/>
            <person name="Basu A."/>
            <person name="Baxendale J."/>
            <person name="Bayraktaroglu L."/>
            <person name="Beasley E.M."/>
            <person name="Beeson K.Y."/>
            <person name="Benos P.V."/>
            <person name="Berman B.P."/>
            <person name="Bhandari D."/>
            <person name="Bolshakov S."/>
            <person name="Borkova D."/>
            <person name="Botchan M.R."/>
            <person name="Bouck J."/>
            <person name="Brokstein P."/>
            <person name="Brottier P."/>
            <person name="Burtis K.C."/>
            <person name="Busam D.A."/>
            <person name="Butler H."/>
            <person name="Cadieu E."/>
            <person name="Center A."/>
            <person name="Chandra I."/>
            <person name="Cherry J.M."/>
            <person name="Cawley S."/>
            <person name="Dahlke C."/>
            <person name="Davenport L.B."/>
            <person name="Davies P."/>
            <person name="de Pablos B."/>
            <person name="Delcher A."/>
            <person name="Deng Z."/>
            <person name="Mays A.D."/>
            <person name="Dew I."/>
            <person name="Dietz S.M."/>
            <person name="Dodson K."/>
            <person name="Doup L.E."/>
            <person name="Downes M."/>
            <person name="Dugan-Rocha S."/>
            <person name="Dunkov B.C."/>
            <person name="Dunn P."/>
            <person name="Durbin K.J."/>
            <person name="Evangelista C.C."/>
            <person name="Ferraz C."/>
            <person name="Ferriera S."/>
            <person name="Fleischmann W."/>
            <person name="Fosler C."/>
            <person name="Gabrielian A.E."/>
            <person name="Garg N.S."/>
            <person name="Gelbart W.M."/>
            <person name="Glasser K."/>
            <person name="Glodek A."/>
            <person name="Gong F."/>
            <person name="Gorrell J.H."/>
            <person name="Gu Z."/>
            <person name="Guan P."/>
            <person name="Harris M."/>
            <person name="Harris N.L."/>
            <person name="Harvey D.A."/>
            <person name="Heiman T.J."/>
            <person name="Hernandez J.R."/>
            <person name="Houck J."/>
            <person name="Hostin D."/>
            <person name="Houston K.A."/>
            <person name="Howland T.J."/>
            <person name="Wei M.-H."/>
            <person name="Ibegwam C."/>
            <person name="Jalali M."/>
            <person name="Kalush F."/>
            <person name="Karpen G.H."/>
            <person name="Ke Z."/>
            <person name="Kennison J.A."/>
            <person name="Ketchum K.A."/>
            <person name="Kimmel B.E."/>
            <person name="Kodira C.D."/>
            <person name="Kraft C.L."/>
            <person name="Kravitz S."/>
            <person name="Kulp D."/>
            <person name="Lai Z."/>
            <person name="Lasko P."/>
            <person name="Lei Y."/>
            <person name="Levitsky A.A."/>
            <person name="Li J.H."/>
            <person name="Li Z."/>
            <person name="Liang Y."/>
            <person name="Lin X."/>
            <person name="Liu X."/>
            <person name="Mattei B."/>
            <person name="McIntosh T.C."/>
            <person name="McLeod M.P."/>
            <person name="McPherson D."/>
            <person name="Merkulov G."/>
            <person name="Milshina N.V."/>
            <person name="Mobarry C."/>
            <person name="Morris J."/>
            <person name="Moshrefi A."/>
            <person name="Mount S.M."/>
            <person name="Moy M."/>
            <person name="Murphy B."/>
            <person name="Murphy L."/>
            <person name="Muzny D.M."/>
            <person name="Nelson D.L."/>
            <person name="Nelson D.R."/>
            <person name="Nelson K.A."/>
            <person name="Nixon K."/>
            <person name="Nusskern D.R."/>
            <person name="Pacleb J.M."/>
            <person name="Palazzolo M."/>
            <person name="Pittman G.S."/>
            <person name="Pan S."/>
            <person name="Pollard J."/>
            <person name="Puri V."/>
            <person name="Reese M.G."/>
            <person name="Reinert K."/>
            <person name="Remington K."/>
            <person name="Saunders R.D.C."/>
            <person name="Scheeler F."/>
            <person name="Shen H."/>
            <person name="Shue B.C."/>
            <person name="Siden-Kiamos I."/>
            <person name="Simpson M."/>
            <person name="Skupski M.P."/>
            <person name="Smith T.J."/>
            <person name="Spier E."/>
            <person name="Spradling A.C."/>
            <person name="Stapleton M."/>
            <person name="Strong R."/>
            <person name="Sun E."/>
            <person name="Svirskas R."/>
            <person name="Tector C."/>
            <person name="Turner R."/>
            <person name="Venter E."/>
            <person name="Wang A.H."/>
            <person name="Wang X."/>
            <person name="Wang Z.-Y."/>
            <person name="Wassarman D.A."/>
            <person name="Weinstock G.M."/>
            <person name="Weissenbach J."/>
            <person name="Williams S.M."/>
            <person name="Woodage T."/>
            <person name="Worley K.C."/>
            <person name="Wu D."/>
            <person name="Yang S."/>
            <person name="Yao Q.A."/>
            <person name="Ye J."/>
            <person name="Yeh R.-F."/>
            <person name="Zaveri J.S."/>
            <person name="Zhan M."/>
            <person name="Zhang G."/>
            <person name="Zhao Q."/>
            <person name="Zheng L."/>
            <person name="Zheng X.H."/>
            <person name="Zhong F.N."/>
            <person name="Zhong W."/>
            <person name="Zhou X."/>
            <person name="Zhu S.C."/>
            <person name="Zhu X."/>
            <person name="Smith H.O."/>
            <person name="Gibbs R.A."/>
            <person name="Myers E.W."/>
            <person name="Rubin G.M."/>
            <person name="Venter J.C."/>
        </authorList>
    </citation>
    <scope>NUCLEOTIDE SEQUENCE [LARGE SCALE GENOMIC DNA]</scope>
    <source>
        <strain>Berkeley</strain>
    </source>
</reference>
<reference key="2">
    <citation type="journal article" date="2002" name="Genome Biol.">
        <title>Annotation of the Drosophila melanogaster euchromatic genome: a systematic review.</title>
        <authorList>
            <person name="Misra S."/>
            <person name="Crosby M.A."/>
            <person name="Mungall C.J."/>
            <person name="Matthews B.B."/>
            <person name="Campbell K.S."/>
            <person name="Hradecky P."/>
            <person name="Huang Y."/>
            <person name="Kaminker J.S."/>
            <person name="Millburn G.H."/>
            <person name="Prochnik S.E."/>
            <person name="Smith C.D."/>
            <person name="Tupy J.L."/>
            <person name="Whitfield E.J."/>
            <person name="Bayraktaroglu L."/>
            <person name="Berman B.P."/>
            <person name="Bettencourt B.R."/>
            <person name="Celniker S.E."/>
            <person name="de Grey A.D.N.J."/>
            <person name="Drysdale R.A."/>
            <person name="Harris N.L."/>
            <person name="Richter J."/>
            <person name="Russo S."/>
            <person name="Schroeder A.J."/>
            <person name="Shu S.Q."/>
            <person name="Stapleton M."/>
            <person name="Yamada C."/>
            <person name="Ashburner M."/>
            <person name="Gelbart W.M."/>
            <person name="Rubin G.M."/>
            <person name="Lewis S.E."/>
        </authorList>
    </citation>
    <scope>GENOME REANNOTATION</scope>
    <source>
        <strain>Berkeley</strain>
    </source>
</reference>
<reference key="3">
    <citation type="journal article" date="2002" name="Genome Biol.">
        <title>A Drosophila full-length cDNA resource.</title>
        <authorList>
            <person name="Stapleton M."/>
            <person name="Carlson J.W."/>
            <person name="Brokstein P."/>
            <person name="Yu C."/>
            <person name="Champe M."/>
            <person name="George R.A."/>
            <person name="Guarin H."/>
            <person name="Kronmiller B."/>
            <person name="Pacleb J.M."/>
            <person name="Park S."/>
            <person name="Wan K.H."/>
            <person name="Rubin G.M."/>
            <person name="Celniker S.E."/>
        </authorList>
    </citation>
    <scope>NUCLEOTIDE SEQUENCE [LARGE SCALE MRNA]</scope>
    <source>
        <strain>Berkeley</strain>
        <tissue>Head</tissue>
    </source>
</reference>
<reference key="4">
    <citation type="journal article" date="2007" name="Development">
        <title>Drosophila Niemann-Pick type C-2 genes control sterol homeostasis and steroid biosynthesis: a model of human neurodegenerative disease.</title>
        <authorList>
            <person name="Huang X."/>
            <person name="Warren J.T."/>
            <person name="Buchanan J."/>
            <person name="Gilbert L.I."/>
            <person name="Scott M.P."/>
        </authorList>
    </citation>
    <scope>FUNCTION</scope>
    <scope>TISSUE SPECIFICITY</scope>
    <scope>DEVELOPMENTAL STAGE</scope>
    <scope>DISRUPTION PHENOTYPE</scope>
</reference>
<organism>
    <name type="scientific">Drosophila melanogaster</name>
    <name type="common">Fruit fly</name>
    <dbReference type="NCBI Taxonomy" id="7227"/>
    <lineage>
        <taxon>Eukaryota</taxon>
        <taxon>Metazoa</taxon>
        <taxon>Ecdysozoa</taxon>
        <taxon>Arthropoda</taxon>
        <taxon>Hexapoda</taxon>
        <taxon>Insecta</taxon>
        <taxon>Pterygota</taxon>
        <taxon>Neoptera</taxon>
        <taxon>Endopterygota</taxon>
        <taxon>Diptera</taxon>
        <taxon>Brachycera</taxon>
        <taxon>Muscomorpha</taxon>
        <taxon>Ephydroidea</taxon>
        <taxon>Drosophilidae</taxon>
        <taxon>Drosophila</taxon>
        <taxon>Sophophora</taxon>
    </lineage>
</organism>
<proteinExistence type="evidence at transcript level"/>
<keyword id="KW-1015">Disulfide bond</keyword>
<keyword id="KW-0325">Glycoprotein</keyword>
<keyword id="KW-0444">Lipid biosynthesis</keyword>
<keyword id="KW-0443">Lipid metabolism</keyword>
<keyword id="KW-1185">Reference proteome</keyword>
<keyword id="KW-0964">Secreted</keyword>
<keyword id="KW-0732">Signal</keyword>
<keyword id="KW-0752">Steroid biosynthesis</keyword>
<comment type="function">
    <text evidence="3">Functions redundantly with Npc2b in regulating sterol homeostasis and ecdysteroid biosynthesis, probably by controlling the availability of sterol substrate.</text>
</comment>
<comment type="subcellular location">
    <subcellularLocation>
        <location evidence="4">Secreted</location>
    </subcellularLocation>
</comment>
<comment type="tissue specificity">
    <text evidence="3">Broadly expressed with a higher level of expression in many tissues, including midgut, salivary gland and ventral nerve cord.</text>
</comment>
<comment type="developmental stage">
    <text evidence="3">Expressed both maternally and zygotically.</text>
</comment>
<comment type="disruption phenotype">
    <text evidence="3">Abnormal sterol distribution in many cells, also lower than normal ecdysteroid levels. Npc2a and Npc2b double mutants undergo apoptotic neurodegeneration.</text>
</comment>
<comment type="similarity">
    <text evidence="4">Belongs to the NPC2 family.</text>
</comment>
<sequence>MLRYAVIACAALVVFAGALEFSDCGSKTGKFTRVAIEGCDTTKAECILKRNTTVSFSIDFALAEEATAVKTVVHGKVLGIEMPFPLANPDACVDSGLKCPLEKDESYRYTATLPVLRSYPKVSVLVKWELQDQDGADIICVEIPAKIQ</sequence>
<accession>Q9VQ62</accession>
<gene>
    <name evidence="5" type="primary">Npc2a</name>
    <name type="synonym">NPC2</name>
    <name type="ORF">CG7291</name>
</gene>
<dbReference type="EMBL" id="AE014134">
    <property type="protein sequence ID" value="AAF51319.1"/>
    <property type="molecule type" value="Genomic_DNA"/>
</dbReference>
<dbReference type="EMBL" id="AY118810">
    <property type="protein sequence ID" value="AAM50670.1"/>
    <property type="molecule type" value="mRNA"/>
</dbReference>
<dbReference type="EMBL" id="BT001844">
    <property type="protein sequence ID" value="AAN71605.1"/>
    <property type="molecule type" value="mRNA"/>
</dbReference>
<dbReference type="RefSeq" id="NP_608637.1">
    <property type="nucleotide sequence ID" value="NM_134793.5"/>
</dbReference>
<dbReference type="SMR" id="Q9VQ62"/>
<dbReference type="BioGRID" id="59609">
    <property type="interactions" value="3"/>
</dbReference>
<dbReference type="DIP" id="DIP-23438N"/>
<dbReference type="FunCoup" id="Q9VQ62">
    <property type="interactions" value="771"/>
</dbReference>
<dbReference type="IntAct" id="Q9VQ62">
    <property type="interactions" value="1"/>
</dbReference>
<dbReference type="STRING" id="7227.FBpp0077492"/>
<dbReference type="GlyCosmos" id="Q9VQ62">
    <property type="glycosylation" value="1 site, No reported glycans"/>
</dbReference>
<dbReference type="GlyGen" id="Q9VQ62">
    <property type="glycosylation" value="1 site"/>
</dbReference>
<dbReference type="PaxDb" id="7227-FBpp0077492"/>
<dbReference type="DNASU" id="33374"/>
<dbReference type="EnsemblMetazoa" id="FBtr0077816">
    <property type="protein sequence ID" value="FBpp0077492"/>
    <property type="gene ID" value="FBgn0031381"/>
</dbReference>
<dbReference type="GeneID" id="33374"/>
<dbReference type="KEGG" id="dme:Dmel_CG7291"/>
<dbReference type="AGR" id="FB:FBgn0031381"/>
<dbReference type="CTD" id="33374"/>
<dbReference type="FlyBase" id="FBgn0031381">
    <property type="gene designation" value="Npc2a"/>
</dbReference>
<dbReference type="VEuPathDB" id="VectorBase:FBgn0031381"/>
<dbReference type="eggNOG" id="KOG4063">
    <property type="taxonomic scope" value="Eukaryota"/>
</dbReference>
<dbReference type="GeneTree" id="ENSGT00390000006223"/>
<dbReference type="HOGENOM" id="CLU_109192_1_0_1"/>
<dbReference type="InParanoid" id="Q9VQ62"/>
<dbReference type="OMA" id="VDIVCVE"/>
<dbReference type="OrthoDB" id="4937502at2759"/>
<dbReference type="PhylomeDB" id="Q9VQ62"/>
<dbReference type="Reactome" id="R-DME-6798695">
    <property type="pathway name" value="Neutrophil degranulation"/>
</dbReference>
<dbReference type="Reactome" id="R-DME-8964038">
    <property type="pathway name" value="LDL clearance"/>
</dbReference>
<dbReference type="BioGRID-ORCS" id="33374">
    <property type="hits" value="0 hits in 1 CRISPR screen"/>
</dbReference>
<dbReference type="GenomeRNAi" id="33374"/>
<dbReference type="PRO" id="PR:Q9VQ62"/>
<dbReference type="Proteomes" id="UP000000803">
    <property type="component" value="Chromosome 2L"/>
</dbReference>
<dbReference type="Bgee" id="FBgn0031381">
    <property type="expression patterns" value="Expressed in lamina wide-field cell (Drosophila) in brain and 212 other cell types or tissues"/>
</dbReference>
<dbReference type="GO" id="GO:0005615">
    <property type="term" value="C:extracellular space"/>
    <property type="evidence" value="ECO:0000314"/>
    <property type="project" value="FlyBase"/>
</dbReference>
<dbReference type="GO" id="GO:0015485">
    <property type="term" value="F:cholesterol binding"/>
    <property type="evidence" value="ECO:0000250"/>
    <property type="project" value="FlyBase"/>
</dbReference>
<dbReference type="GO" id="GO:0120020">
    <property type="term" value="F:cholesterol transfer activity"/>
    <property type="evidence" value="ECO:0000250"/>
    <property type="project" value="FlyBase"/>
</dbReference>
<dbReference type="GO" id="GO:0030882">
    <property type="term" value="F:lipid antigen binding"/>
    <property type="evidence" value="ECO:0000314"/>
    <property type="project" value="FlyBase"/>
</dbReference>
<dbReference type="GO" id="GO:0001530">
    <property type="term" value="F:lipopolysaccharide binding"/>
    <property type="evidence" value="ECO:0000314"/>
    <property type="project" value="FlyBase"/>
</dbReference>
<dbReference type="GO" id="GO:0070891">
    <property type="term" value="F:lipoteichoic acid binding"/>
    <property type="evidence" value="ECO:0000314"/>
    <property type="project" value="FlyBase"/>
</dbReference>
<dbReference type="GO" id="GO:0042834">
    <property type="term" value="F:peptidoglycan binding"/>
    <property type="evidence" value="ECO:0000314"/>
    <property type="project" value="FlyBase"/>
</dbReference>
<dbReference type="GO" id="GO:0032934">
    <property type="term" value="F:sterol binding"/>
    <property type="evidence" value="ECO:0000250"/>
    <property type="project" value="FlyBase"/>
</dbReference>
<dbReference type="GO" id="GO:0045456">
    <property type="term" value="P:ecdysteroid biosynthetic process"/>
    <property type="evidence" value="ECO:0000316"/>
    <property type="project" value="FlyBase"/>
</dbReference>
<dbReference type="GO" id="GO:0032367">
    <property type="term" value="P:intracellular cholesterol transport"/>
    <property type="evidence" value="ECO:0000250"/>
    <property type="project" value="FlyBase"/>
</dbReference>
<dbReference type="GO" id="GO:1900426">
    <property type="term" value="P:positive regulation of defense response to bacterium"/>
    <property type="evidence" value="ECO:0000270"/>
    <property type="project" value="FlyBase"/>
</dbReference>
<dbReference type="GO" id="GO:0055092">
    <property type="term" value="P:sterol homeostasis"/>
    <property type="evidence" value="ECO:0000315"/>
    <property type="project" value="FlyBase"/>
</dbReference>
<dbReference type="GO" id="GO:0015918">
    <property type="term" value="P:sterol transport"/>
    <property type="evidence" value="ECO:0000315"/>
    <property type="project" value="FlyBase"/>
</dbReference>
<dbReference type="GO" id="GO:0008039">
    <property type="term" value="P:synaptic target recognition"/>
    <property type="evidence" value="ECO:0000315"/>
    <property type="project" value="FlyBase"/>
</dbReference>
<dbReference type="CDD" id="cd00916">
    <property type="entry name" value="Npc2_like"/>
    <property type="match status" value="1"/>
</dbReference>
<dbReference type="FunFam" id="2.60.40.770:FF:000001">
    <property type="entry name" value="NPC intracellular cholesterol transporter 2"/>
    <property type="match status" value="1"/>
</dbReference>
<dbReference type="Gene3D" id="2.60.40.770">
    <property type="match status" value="1"/>
</dbReference>
<dbReference type="InterPro" id="IPR014756">
    <property type="entry name" value="Ig_E-set"/>
</dbReference>
<dbReference type="InterPro" id="IPR003172">
    <property type="entry name" value="ML_dom"/>
</dbReference>
<dbReference type="InterPro" id="IPR033916">
    <property type="entry name" value="ML_Npc2-like"/>
</dbReference>
<dbReference type="InterPro" id="IPR039670">
    <property type="entry name" value="NPC2-like"/>
</dbReference>
<dbReference type="PANTHER" id="PTHR11306:SF56">
    <property type="entry name" value="LP08842P-RELATED"/>
    <property type="match status" value="1"/>
</dbReference>
<dbReference type="PANTHER" id="PTHR11306">
    <property type="entry name" value="NIEMANN PICK TYPE C2 PROTEIN NPC2-RELATED"/>
    <property type="match status" value="1"/>
</dbReference>
<dbReference type="Pfam" id="PF02221">
    <property type="entry name" value="E1_DerP2_DerF2"/>
    <property type="match status" value="1"/>
</dbReference>
<dbReference type="SMART" id="SM00737">
    <property type="entry name" value="ML"/>
    <property type="match status" value="1"/>
</dbReference>
<dbReference type="SUPFAM" id="SSF81296">
    <property type="entry name" value="E set domains"/>
    <property type="match status" value="1"/>
</dbReference>
<feature type="signal peptide" evidence="2">
    <location>
        <begin position="1"/>
        <end position="16"/>
    </location>
</feature>
<feature type="chain" id="PRO_0000019866" description="NPC intracellular cholesterol transporter 2 homolog a">
    <location>
        <begin position="17"/>
        <end position="148"/>
    </location>
</feature>
<feature type="glycosylation site" description="N-linked (GlcNAc...) asparagine" evidence="2">
    <location>
        <position position="51"/>
    </location>
</feature>
<feature type="disulfide bond" evidence="1">
    <location>
        <begin position="24"/>
        <end position="140"/>
    </location>
</feature>
<feature type="disulfide bond" evidence="1">
    <location>
        <begin position="39"/>
        <end position="46"/>
    </location>
</feature>
<feature type="disulfide bond" evidence="1">
    <location>
        <begin position="92"/>
        <end position="99"/>
    </location>
</feature>